<keyword id="KW-0903">Direct protein sequencing</keyword>
<keyword id="KW-1015">Disulfide bond</keyword>
<keyword id="KW-0646">Protease inhibitor</keyword>
<keyword id="KW-0964">Secreted</keyword>
<keyword id="KW-0722">Serine protease inhibitor</keyword>
<keyword id="KW-0732">Signal</keyword>
<keyword id="KW-0800">Toxin</keyword>
<evidence type="ECO:0000250" key="1"/>
<evidence type="ECO:0000255" key="2">
    <source>
        <dbReference type="PROSITE-ProRule" id="PRU00031"/>
    </source>
</evidence>
<evidence type="ECO:0000269" key="3">
    <source>
    </source>
</evidence>
<evidence type="ECO:0000305" key="4"/>
<feature type="signal peptide" evidence="3">
    <location>
        <begin position="1"/>
        <end position="24"/>
    </location>
</feature>
<feature type="chain" id="PRO_0000419227" description="Protease inhibitor 1">
    <location>
        <begin position="25"/>
        <end position="81"/>
    </location>
</feature>
<feature type="domain" description="BPTI/Kunitz inhibitor" evidence="2">
    <location>
        <begin position="29"/>
        <end position="79"/>
    </location>
</feature>
<feature type="disulfide bond" evidence="2">
    <location>
        <begin position="29"/>
        <end position="79"/>
    </location>
</feature>
<feature type="disulfide bond" evidence="2">
    <location>
        <begin position="38"/>
        <end position="62"/>
    </location>
</feature>
<feature type="disulfide bond" evidence="2">
    <location>
        <begin position="54"/>
        <end position="75"/>
    </location>
</feature>
<comment type="function">
    <text evidence="1">Snake venom serine protease inhibitor.</text>
</comment>
<comment type="subcellular location">
    <subcellularLocation>
        <location>Secreted</location>
    </subcellularLocation>
</comment>
<comment type="tissue specificity">
    <text>Expressed by the venom gland.</text>
</comment>
<comment type="mass spectrometry" mass="6347.0" method="Electrospray" evidence="3"/>
<comment type="similarity">
    <text evidence="4">Belongs to the venom Kunitz-type family.</text>
</comment>
<name>VKT1_WALAE</name>
<reference key="1">
    <citation type="journal article" date="2008" name="Toxicon">
        <title>Cloning, characterization and phylogenetic analyses of members of three major venom families from a single specimen of Walterinnesia aegyptia.</title>
        <authorList>
            <person name="Tsai H.-Y."/>
            <person name="Wang Y.M."/>
            <person name="Tsai I.-H."/>
        </authorList>
    </citation>
    <scope>NUCLEOTIDE SEQUENCE [MRNA]</scope>
    <scope>PROTEIN SEQUENCE OF 25-40</scope>
    <scope>MASS SPECTROMETRY</scope>
    <source>
        <tissue>Venom</tissue>
        <tissue>Venom gland</tissue>
    </source>
</reference>
<proteinExistence type="evidence at protein level"/>
<dbReference type="EMBL" id="EU196558">
    <property type="protein sequence ID" value="ABX82867.1"/>
    <property type="molecule type" value="mRNA"/>
</dbReference>
<dbReference type="SMR" id="C1IC50"/>
<dbReference type="MEROPS" id="I02.055"/>
<dbReference type="GO" id="GO:0005615">
    <property type="term" value="C:extracellular space"/>
    <property type="evidence" value="ECO:0007669"/>
    <property type="project" value="TreeGrafter"/>
</dbReference>
<dbReference type="GO" id="GO:0004867">
    <property type="term" value="F:serine-type endopeptidase inhibitor activity"/>
    <property type="evidence" value="ECO:0007669"/>
    <property type="project" value="UniProtKB-KW"/>
</dbReference>
<dbReference type="GO" id="GO:0090729">
    <property type="term" value="F:toxin activity"/>
    <property type="evidence" value="ECO:0007669"/>
    <property type="project" value="UniProtKB-KW"/>
</dbReference>
<dbReference type="CDD" id="cd22594">
    <property type="entry name" value="Kunitz_textilinin-like"/>
    <property type="match status" value="1"/>
</dbReference>
<dbReference type="FunFam" id="4.10.410.10:FF:000021">
    <property type="entry name" value="Serine protease inhibitor, putative"/>
    <property type="match status" value="1"/>
</dbReference>
<dbReference type="Gene3D" id="4.10.410.10">
    <property type="entry name" value="Pancreatic trypsin inhibitor Kunitz domain"/>
    <property type="match status" value="1"/>
</dbReference>
<dbReference type="InterPro" id="IPR002223">
    <property type="entry name" value="Kunitz_BPTI"/>
</dbReference>
<dbReference type="InterPro" id="IPR036880">
    <property type="entry name" value="Kunitz_BPTI_sf"/>
</dbReference>
<dbReference type="InterPro" id="IPR020901">
    <property type="entry name" value="Prtase_inh_Kunz-CS"/>
</dbReference>
<dbReference type="InterPro" id="IPR050098">
    <property type="entry name" value="TFPI/VKTCI-like"/>
</dbReference>
<dbReference type="PANTHER" id="PTHR10083:SF374">
    <property type="entry name" value="BPTI_KUNITZ INHIBITOR DOMAIN-CONTAINING PROTEIN"/>
    <property type="match status" value="1"/>
</dbReference>
<dbReference type="PANTHER" id="PTHR10083">
    <property type="entry name" value="KUNITZ-TYPE PROTEASE INHIBITOR-RELATED"/>
    <property type="match status" value="1"/>
</dbReference>
<dbReference type="Pfam" id="PF00014">
    <property type="entry name" value="Kunitz_BPTI"/>
    <property type="match status" value="1"/>
</dbReference>
<dbReference type="PRINTS" id="PR00759">
    <property type="entry name" value="BASICPTASE"/>
</dbReference>
<dbReference type="SMART" id="SM00131">
    <property type="entry name" value="KU"/>
    <property type="match status" value="1"/>
</dbReference>
<dbReference type="SUPFAM" id="SSF57362">
    <property type="entry name" value="BPTI-like"/>
    <property type="match status" value="1"/>
</dbReference>
<dbReference type="PROSITE" id="PS00280">
    <property type="entry name" value="BPTI_KUNITZ_1"/>
    <property type="match status" value="1"/>
</dbReference>
<dbReference type="PROSITE" id="PS50279">
    <property type="entry name" value="BPTI_KUNITZ_2"/>
    <property type="match status" value="1"/>
</dbReference>
<organism>
    <name type="scientific">Walterinnesia aegyptia</name>
    <name type="common">Desert black snake</name>
    <dbReference type="NCBI Taxonomy" id="64182"/>
    <lineage>
        <taxon>Eukaryota</taxon>
        <taxon>Metazoa</taxon>
        <taxon>Chordata</taxon>
        <taxon>Craniata</taxon>
        <taxon>Vertebrata</taxon>
        <taxon>Euteleostomi</taxon>
        <taxon>Lepidosauria</taxon>
        <taxon>Squamata</taxon>
        <taxon>Bifurcata</taxon>
        <taxon>Unidentata</taxon>
        <taxon>Episquamata</taxon>
        <taxon>Toxicofera</taxon>
        <taxon>Serpentes</taxon>
        <taxon>Colubroidea</taxon>
        <taxon>Elapidae</taxon>
        <taxon>Elapinae</taxon>
        <taxon>Walterinnesia</taxon>
    </lineage>
</organism>
<sequence length="81" mass="8777">MSSGGLLLLLGLLTLWAELTPVSGRPGLCELPAETGPCKARIRAFYYNPHSHKCLEFTYGGCKGNANNFKTIDECNRTCVG</sequence>
<accession>C1IC50</accession>
<protein>
    <recommendedName>
        <fullName>Protease inhibitor 1</fullName>
    </recommendedName>
    <alternativeName>
        <fullName>Kunitz inhibitor KIn-I</fullName>
    </alternativeName>
</protein>